<proteinExistence type="inferred from homology"/>
<organism>
    <name type="scientific">Ralstonia nicotianae (strain ATCC BAA-1114 / GMI1000)</name>
    <name type="common">Ralstonia solanacearum</name>
    <dbReference type="NCBI Taxonomy" id="267608"/>
    <lineage>
        <taxon>Bacteria</taxon>
        <taxon>Pseudomonadati</taxon>
        <taxon>Pseudomonadota</taxon>
        <taxon>Betaproteobacteria</taxon>
        <taxon>Burkholderiales</taxon>
        <taxon>Burkholderiaceae</taxon>
        <taxon>Ralstonia</taxon>
        <taxon>Ralstonia solanacearum species complex</taxon>
    </lineage>
</organism>
<name>FUMC_RALN1</name>
<evidence type="ECO:0000255" key="1">
    <source>
        <dbReference type="HAMAP-Rule" id="MF_00743"/>
    </source>
</evidence>
<protein>
    <recommendedName>
        <fullName evidence="1">Fumarate hydratase class II</fullName>
        <shortName evidence="1">Fumarase C</shortName>
        <ecNumber evidence="1">4.2.1.2</ecNumber>
    </recommendedName>
    <alternativeName>
        <fullName evidence="1">Aerobic fumarase</fullName>
    </alternativeName>
    <alternativeName>
        <fullName evidence="1">Iron-independent fumarase</fullName>
    </alternativeName>
</protein>
<accession>Q8XQE8</accession>
<geneLocation type="plasmid">
    <name>megaplasmid Rsp</name>
</geneLocation>
<reference key="1">
    <citation type="journal article" date="2002" name="Nature">
        <title>Genome sequence of the plant pathogen Ralstonia solanacearum.</title>
        <authorList>
            <person name="Salanoubat M."/>
            <person name="Genin S."/>
            <person name="Artiguenave F."/>
            <person name="Gouzy J."/>
            <person name="Mangenot S."/>
            <person name="Arlat M."/>
            <person name="Billault A."/>
            <person name="Brottier P."/>
            <person name="Camus J.-C."/>
            <person name="Cattolico L."/>
            <person name="Chandler M."/>
            <person name="Choisne N."/>
            <person name="Claudel-Renard C."/>
            <person name="Cunnac S."/>
            <person name="Demange N."/>
            <person name="Gaspin C."/>
            <person name="Lavie M."/>
            <person name="Moisan A."/>
            <person name="Robert C."/>
            <person name="Saurin W."/>
            <person name="Schiex T."/>
            <person name="Siguier P."/>
            <person name="Thebault P."/>
            <person name="Whalen M."/>
            <person name="Wincker P."/>
            <person name="Levy M."/>
            <person name="Weissenbach J."/>
            <person name="Boucher C.A."/>
        </authorList>
    </citation>
    <scope>NUCLEOTIDE SEQUENCE [LARGE SCALE GENOMIC DNA]</scope>
    <source>
        <strain>ATCC BAA-1114 / GMI1000</strain>
    </source>
</reference>
<comment type="function">
    <text evidence="1">Involved in the TCA cycle. Catalyzes the stereospecific interconversion of fumarate to L-malate.</text>
</comment>
<comment type="catalytic activity">
    <reaction evidence="1">
        <text>(S)-malate = fumarate + H2O</text>
        <dbReference type="Rhea" id="RHEA:12460"/>
        <dbReference type="ChEBI" id="CHEBI:15377"/>
        <dbReference type="ChEBI" id="CHEBI:15589"/>
        <dbReference type="ChEBI" id="CHEBI:29806"/>
        <dbReference type="EC" id="4.2.1.2"/>
    </reaction>
</comment>
<comment type="pathway">
    <text evidence="1">Carbohydrate metabolism; tricarboxylic acid cycle; (S)-malate from fumarate: step 1/1.</text>
</comment>
<comment type="subunit">
    <text evidence="1">Homotetramer.</text>
</comment>
<comment type="subcellular location">
    <subcellularLocation>
        <location evidence="1">Cytoplasm</location>
    </subcellularLocation>
</comment>
<comment type="miscellaneous">
    <text evidence="1">There are 2 substrate-binding sites: the catalytic A site, and the non-catalytic B site that may play a role in the transfer of substrate or product between the active site and the solvent. Alternatively, the B site may bind allosteric effectors.</text>
</comment>
<comment type="similarity">
    <text evidence="1">Belongs to the class-II fumarase/aspartase family. Fumarase subfamily.</text>
</comment>
<feature type="chain" id="PRO_0000161303" description="Fumarate hydratase class II">
    <location>
        <begin position="1"/>
        <end position="461"/>
    </location>
</feature>
<feature type="active site" description="Proton donor/acceptor" evidence="1">
    <location>
        <position position="187"/>
    </location>
</feature>
<feature type="active site" evidence="1">
    <location>
        <position position="317"/>
    </location>
</feature>
<feature type="binding site" evidence="1">
    <location>
        <begin position="97"/>
        <end position="99"/>
    </location>
    <ligand>
        <name>substrate</name>
    </ligand>
</feature>
<feature type="binding site" evidence="1">
    <location>
        <position position="125"/>
    </location>
    <ligand>
        <name>substrate</name>
    </ligand>
</feature>
<feature type="binding site" description="in site B" evidence="1">
    <location>
        <begin position="128"/>
        <end position="131"/>
    </location>
    <ligand>
        <name>substrate</name>
    </ligand>
</feature>
<feature type="binding site" evidence="1">
    <location>
        <begin position="138"/>
        <end position="140"/>
    </location>
    <ligand>
        <name>substrate</name>
    </ligand>
</feature>
<feature type="binding site" evidence="1">
    <location>
        <position position="186"/>
    </location>
    <ligand>
        <name>substrate</name>
    </ligand>
</feature>
<feature type="binding site" evidence="1">
    <location>
        <position position="318"/>
    </location>
    <ligand>
        <name>substrate</name>
    </ligand>
</feature>
<feature type="binding site" evidence="1">
    <location>
        <begin position="323"/>
        <end position="325"/>
    </location>
    <ligand>
        <name>substrate</name>
    </ligand>
</feature>
<feature type="site" description="Important for catalytic activity" evidence="1">
    <location>
        <position position="330"/>
    </location>
</feature>
<dbReference type="EC" id="4.2.1.2" evidence="1"/>
<dbReference type="EMBL" id="AL646053">
    <property type="protein sequence ID" value="CAD18430.1"/>
    <property type="molecule type" value="Genomic_DNA"/>
</dbReference>
<dbReference type="RefSeq" id="WP_011004561.1">
    <property type="nucleotide sequence ID" value="NC_003296.1"/>
</dbReference>
<dbReference type="SMR" id="Q8XQE8"/>
<dbReference type="STRING" id="267608.RSp1279"/>
<dbReference type="EnsemblBacteria" id="CAD18430">
    <property type="protein sequence ID" value="CAD18430"/>
    <property type="gene ID" value="RSp1279"/>
</dbReference>
<dbReference type="KEGG" id="rso:RSp1279"/>
<dbReference type="eggNOG" id="COG0114">
    <property type="taxonomic scope" value="Bacteria"/>
</dbReference>
<dbReference type="HOGENOM" id="CLU_021594_4_1_4"/>
<dbReference type="UniPathway" id="UPA00223">
    <property type="reaction ID" value="UER01007"/>
</dbReference>
<dbReference type="Proteomes" id="UP000001436">
    <property type="component" value="Plasmid megaplasmid Rsp"/>
</dbReference>
<dbReference type="GO" id="GO:0005737">
    <property type="term" value="C:cytoplasm"/>
    <property type="evidence" value="ECO:0007669"/>
    <property type="project" value="UniProtKB-SubCell"/>
</dbReference>
<dbReference type="GO" id="GO:0004333">
    <property type="term" value="F:fumarate hydratase activity"/>
    <property type="evidence" value="ECO:0007669"/>
    <property type="project" value="UniProtKB-UniRule"/>
</dbReference>
<dbReference type="GO" id="GO:0006106">
    <property type="term" value="P:fumarate metabolic process"/>
    <property type="evidence" value="ECO:0007669"/>
    <property type="project" value="InterPro"/>
</dbReference>
<dbReference type="GO" id="GO:0006108">
    <property type="term" value="P:malate metabolic process"/>
    <property type="evidence" value="ECO:0007669"/>
    <property type="project" value="TreeGrafter"/>
</dbReference>
<dbReference type="GO" id="GO:0006099">
    <property type="term" value="P:tricarboxylic acid cycle"/>
    <property type="evidence" value="ECO:0007669"/>
    <property type="project" value="UniProtKB-UniRule"/>
</dbReference>
<dbReference type="CDD" id="cd01362">
    <property type="entry name" value="Fumarase_classII"/>
    <property type="match status" value="1"/>
</dbReference>
<dbReference type="FunFam" id="1.10.40.30:FF:000002">
    <property type="entry name" value="Fumarate hydratase class II"/>
    <property type="match status" value="1"/>
</dbReference>
<dbReference type="FunFam" id="1.10.275.10:FF:000001">
    <property type="entry name" value="Fumarate hydratase, mitochondrial"/>
    <property type="match status" value="1"/>
</dbReference>
<dbReference type="FunFam" id="1.20.200.10:FF:000001">
    <property type="entry name" value="Fumarate hydratase, mitochondrial"/>
    <property type="match status" value="1"/>
</dbReference>
<dbReference type="Gene3D" id="1.10.40.30">
    <property type="entry name" value="Fumarase/aspartase (C-terminal domain)"/>
    <property type="match status" value="1"/>
</dbReference>
<dbReference type="Gene3D" id="1.20.200.10">
    <property type="entry name" value="Fumarase/aspartase (Central domain)"/>
    <property type="match status" value="1"/>
</dbReference>
<dbReference type="Gene3D" id="1.10.275.10">
    <property type="entry name" value="Fumarase/aspartase (N-terminal domain)"/>
    <property type="match status" value="1"/>
</dbReference>
<dbReference type="HAMAP" id="MF_00743">
    <property type="entry name" value="FumaraseC"/>
    <property type="match status" value="1"/>
</dbReference>
<dbReference type="InterPro" id="IPR005677">
    <property type="entry name" value="Fum_hydII"/>
</dbReference>
<dbReference type="InterPro" id="IPR024083">
    <property type="entry name" value="Fumarase/histidase_N"/>
</dbReference>
<dbReference type="InterPro" id="IPR018951">
    <property type="entry name" value="Fumarase_C_C"/>
</dbReference>
<dbReference type="InterPro" id="IPR020557">
    <property type="entry name" value="Fumarate_lyase_CS"/>
</dbReference>
<dbReference type="InterPro" id="IPR000362">
    <property type="entry name" value="Fumarate_lyase_fam"/>
</dbReference>
<dbReference type="InterPro" id="IPR022761">
    <property type="entry name" value="Fumarate_lyase_N"/>
</dbReference>
<dbReference type="InterPro" id="IPR008948">
    <property type="entry name" value="L-Aspartase-like"/>
</dbReference>
<dbReference type="NCBIfam" id="TIGR00979">
    <property type="entry name" value="fumC_II"/>
    <property type="match status" value="1"/>
</dbReference>
<dbReference type="NCBIfam" id="NF008909">
    <property type="entry name" value="PRK12273.1"/>
    <property type="match status" value="1"/>
</dbReference>
<dbReference type="PANTHER" id="PTHR11444">
    <property type="entry name" value="ASPARTATEAMMONIA/ARGININOSUCCINATE/ADENYLOSUCCINATE LYASE"/>
    <property type="match status" value="1"/>
</dbReference>
<dbReference type="PANTHER" id="PTHR11444:SF1">
    <property type="entry name" value="FUMARATE HYDRATASE, MITOCHONDRIAL"/>
    <property type="match status" value="1"/>
</dbReference>
<dbReference type="Pfam" id="PF10415">
    <property type="entry name" value="FumaraseC_C"/>
    <property type="match status" value="1"/>
</dbReference>
<dbReference type="Pfam" id="PF00206">
    <property type="entry name" value="Lyase_1"/>
    <property type="match status" value="1"/>
</dbReference>
<dbReference type="PRINTS" id="PR00149">
    <property type="entry name" value="FUMRATELYASE"/>
</dbReference>
<dbReference type="SUPFAM" id="SSF48557">
    <property type="entry name" value="L-aspartase-like"/>
    <property type="match status" value="1"/>
</dbReference>
<dbReference type="PROSITE" id="PS00163">
    <property type="entry name" value="FUMARATE_LYASES"/>
    <property type="match status" value="1"/>
</dbReference>
<sequence>MTTRTERDTFGPIEVPADRLWGAQTQRSLQNFDIAGDRMPRELIDALARIKRASAAVNQRLGLLPADKANAVIAAADEVIAGKHPGEFPLVVWQTGSGTQSNMNMNEVLANRASELLGGERGEARLVHPNDDVNRSQSSNDVFPTAMHVAAVTAITRHLLPSLRALRETLARKAIDFDDIIKIGRTHLQDATPLTLGQEFSGYAAQLQHSETHLNAALPHLCELALGGTAVGTGLNAPAGYAEQVAAELAALTGLPFVTSPNKFETMASADGLVHAHGALKTLAASLTKIANDIRWLASGPRSGLGELSIPENEPGSSIMPGKVNPTQSEAMTMLCAQVFGNDVAVNIGGASGNFELNVFRPMIAYNFLHSARLLADGMRSFNDHCAVGIEPNRERIAELVQRSLMLVTALNPHIGYDKSAQIAKKAHKEGTSLREAALALGYVTAEQFDAWVRPEQMVGR</sequence>
<keyword id="KW-0963">Cytoplasm</keyword>
<keyword id="KW-0456">Lyase</keyword>
<keyword id="KW-0614">Plasmid</keyword>
<keyword id="KW-1185">Reference proteome</keyword>
<keyword id="KW-0816">Tricarboxylic acid cycle</keyword>
<gene>
    <name evidence="1" type="primary">fumC</name>
    <name type="ordered locus">RSp1279</name>
    <name type="ORF">RS05324</name>
</gene>